<sequence length="269" mass="29752">MANDKKKLTVNDIKNKKIKGEPIVMMTAYDALFAKIFNDYADIILVGDSLNMSFHLKKETISATMEMMLYHTNAVCAGAKSSFILADMPFGSYSDERSALKNAMKFFKQTEADAVKIEGGMKNVAIIKRLCEEGISVMGHIGLMPQFSKFEGGFKIKGRDETEVKRLMDEAKAIEQAGAFAILLEGTINSVAKQISDSVSVPVIGIGSGADVDGQVLVWSDMLGFFEDFKPKFAKRYLNGAELVRQSVQTYANEVKNRIFPSEEFSYKG</sequence>
<name>PANB_CAMC5</name>
<organism>
    <name type="scientific">Campylobacter curvus (strain 525.92)</name>
    <dbReference type="NCBI Taxonomy" id="360105"/>
    <lineage>
        <taxon>Bacteria</taxon>
        <taxon>Pseudomonadati</taxon>
        <taxon>Campylobacterota</taxon>
        <taxon>Epsilonproteobacteria</taxon>
        <taxon>Campylobacterales</taxon>
        <taxon>Campylobacteraceae</taxon>
        <taxon>Campylobacter</taxon>
    </lineage>
</organism>
<comment type="function">
    <text evidence="1">Catalyzes the reversible reaction in which hydroxymethyl group from 5,10-methylenetetrahydrofolate is transferred onto alpha-ketoisovalerate to form ketopantoate.</text>
</comment>
<comment type="catalytic activity">
    <reaction evidence="1">
        <text>3-methyl-2-oxobutanoate + (6R)-5,10-methylene-5,6,7,8-tetrahydrofolate + H2O = 2-dehydropantoate + (6S)-5,6,7,8-tetrahydrofolate</text>
        <dbReference type="Rhea" id="RHEA:11824"/>
        <dbReference type="ChEBI" id="CHEBI:11561"/>
        <dbReference type="ChEBI" id="CHEBI:11851"/>
        <dbReference type="ChEBI" id="CHEBI:15377"/>
        <dbReference type="ChEBI" id="CHEBI:15636"/>
        <dbReference type="ChEBI" id="CHEBI:57453"/>
        <dbReference type="EC" id="2.1.2.11"/>
    </reaction>
</comment>
<comment type="cofactor">
    <cofactor evidence="1">
        <name>Mg(2+)</name>
        <dbReference type="ChEBI" id="CHEBI:18420"/>
    </cofactor>
    <text evidence="1">Binds 1 Mg(2+) ion per subunit.</text>
</comment>
<comment type="pathway">
    <text evidence="1">Cofactor biosynthesis; (R)-pantothenate biosynthesis; (R)-pantoate from 3-methyl-2-oxobutanoate: step 1/2.</text>
</comment>
<comment type="subunit">
    <text evidence="1">Homodecamer; pentamer of dimers.</text>
</comment>
<comment type="subcellular location">
    <subcellularLocation>
        <location evidence="1">Cytoplasm</location>
    </subcellularLocation>
</comment>
<comment type="similarity">
    <text evidence="1">Belongs to the PanB family.</text>
</comment>
<feature type="chain" id="PRO_1000118119" description="3-methyl-2-oxobutanoate hydroxymethyltransferase">
    <location>
        <begin position="1"/>
        <end position="269"/>
    </location>
</feature>
<feature type="active site" description="Proton acceptor" evidence="1">
    <location>
        <position position="185"/>
    </location>
</feature>
<feature type="binding site" evidence="1">
    <location>
        <begin position="48"/>
        <end position="49"/>
    </location>
    <ligand>
        <name>3-methyl-2-oxobutanoate</name>
        <dbReference type="ChEBI" id="CHEBI:11851"/>
    </ligand>
</feature>
<feature type="binding site" evidence="1">
    <location>
        <position position="48"/>
    </location>
    <ligand>
        <name>Mg(2+)</name>
        <dbReference type="ChEBI" id="CHEBI:18420"/>
    </ligand>
</feature>
<feature type="binding site" evidence="1">
    <location>
        <position position="87"/>
    </location>
    <ligand>
        <name>3-methyl-2-oxobutanoate</name>
        <dbReference type="ChEBI" id="CHEBI:11851"/>
    </ligand>
</feature>
<feature type="binding site" evidence="1">
    <location>
        <position position="87"/>
    </location>
    <ligand>
        <name>Mg(2+)</name>
        <dbReference type="ChEBI" id="CHEBI:18420"/>
    </ligand>
</feature>
<feature type="binding site" evidence="1">
    <location>
        <position position="116"/>
    </location>
    <ligand>
        <name>3-methyl-2-oxobutanoate</name>
        <dbReference type="ChEBI" id="CHEBI:11851"/>
    </ligand>
</feature>
<feature type="binding site" evidence="1">
    <location>
        <position position="118"/>
    </location>
    <ligand>
        <name>Mg(2+)</name>
        <dbReference type="ChEBI" id="CHEBI:18420"/>
    </ligand>
</feature>
<protein>
    <recommendedName>
        <fullName evidence="1">3-methyl-2-oxobutanoate hydroxymethyltransferase</fullName>
        <ecNumber evidence="1">2.1.2.11</ecNumber>
    </recommendedName>
    <alternativeName>
        <fullName evidence="1">Ketopantoate hydroxymethyltransferase</fullName>
        <shortName evidence="1">KPHMT</shortName>
    </alternativeName>
</protein>
<dbReference type="EC" id="2.1.2.11" evidence="1"/>
<dbReference type="EMBL" id="CP000767">
    <property type="protein sequence ID" value="EAT99735.1"/>
    <property type="molecule type" value="Genomic_DNA"/>
</dbReference>
<dbReference type="RefSeq" id="WP_011992553.1">
    <property type="nucleotide sequence ID" value="NC_009715.2"/>
</dbReference>
<dbReference type="SMR" id="A7GZP8"/>
<dbReference type="STRING" id="360105.CCV52592_1923"/>
<dbReference type="KEGG" id="ccv:CCV52592_1923"/>
<dbReference type="HOGENOM" id="CLU_036645_1_0_7"/>
<dbReference type="OrthoDB" id="9781789at2"/>
<dbReference type="UniPathway" id="UPA00028">
    <property type="reaction ID" value="UER00003"/>
</dbReference>
<dbReference type="Proteomes" id="UP000006380">
    <property type="component" value="Chromosome"/>
</dbReference>
<dbReference type="GO" id="GO:0005737">
    <property type="term" value="C:cytoplasm"/>
    <property type="evidence" value="ECO:0007669"/>
    <property type="project" value="UniProtKB-SubCell"/>
</dbReference>
<dbReference type="GO" id="GO:0003864">
    <property type="term" value="F:3-methyl-2-oxobutanoate hydroxymethyltransferase activity"/>
    <property type="evidence" value="ECO:0007669"/>
    <property type="project" value="UniProtKB-UniRule"/>
</dbReference>
<dbReference type="GO" id="GO:0000287">
    <property type="term" value="F:magnesium ion binding"/>
    <property type="evidence" value="ECO:0007669"/>
    <property type="project" value="TreeGrafter"/>
</dbReference>
<dbReference type="GO" id="GO:0015940">
    <property type="term" value="P:pantothenate biosynthetic process"/>
    <property type="evidence" value="ECO:0007669"/>
    <property type="project" value="UniProtKB-UniRule"/>
</dbReference>
<dbReference type="CDD" id="cd06557">
    <property type="entry name" value="KPHMT-like"/>
    <property type="match status" value="1"/>
</dbReference>
<dbReference type="FunFam" id="3.20.20.60:FF:000003">
    <property type="entry name" value="3-methyl-2-oxobutanoate hydroxymethyltransferase"/>
    <property type="match status" value="1"/>
</dbReference>
<dbReference type="Gene3D" id="3.20.20.60">
    <property type="entry name" value="Phosphoenolpyruvate-binding domains"/>
    <property type="match status" value="1"/>
</dbReference>
<dbReference type="HAMAP" id="MF_00156">
    <property type="entry name" value="PanB"/>
    <property type="match status" value="1"/>
</dbReference>
<dbReference type="InterPro" id="IPR003700">
    <property type="entry name" value="Pantoate_hydroxy_MeTrfase"/>
</dbReference>
<dbReference type="InterPro" id="IPR015813">
    <property type="entry name" value="Pyrv/PenolPyrv_kinase-like_dom"/>
</dbReference>
<dbReference type="InterPro" id="IPR040442">
    <property type="entry name" value="Pyrv_kinase-like_dom_sf"/>
</dbReference>
<dbReference type="NCBIfam" id="TIGR00222">
    <property type="entry name" value="panB"/>
    <property type="match status" value="1"/>
</dbReference>
<dbReference type="NCBIfam" id="NF001452">
    <property type="entry name" value="PRK00311.1"/>
    <property type="match status" value="1"/>
</dbReference>
<dbReference type="PANTHER" id="PTHR20881">
    <property type="entry name" value="3-METHYL-2-OXOBUTANOATE HYDROXYMETHYLTRANSFERASE"/>
    <property type="match status" value="1"/>
</dbReference>
<dbReference type="PANTHER" id="PTHR20881:SF0">
    <property type="entry name" value="3-METHYL-2-OXOBUTANOATE HYDROXYMETHYLTRANSFERASE"/>
    <property type="match status" value="1"/>
</dbReference>
<dbReference type="Pfam" id="PF02548">
    <property type="entry name" value="Pantoate_transf"/>
    <property type="match status" value="1"/>
</dbReference>
<dbReference type="PIRSF" id="PIRSF000388">
    <property type="entry name" value="Pantoate_hydroxy_MeTrfase"/>
    <property type="match status" value="1"/>
</dbReference>
<dbReference type="SUPFAM" id="SSF51621">
    <property type="entry name" value="Phosphoenolpyruvate/pyruvate domain"/>
    <property type="match status" value="1"/>
</dbReference>
<reference key="1">
    <citation type="submission" date="2007-07" db="EMBL/GenBank/DDBJ databases">
        <title>Genome sequence of Campylobacter curvus 525.92 isolated from human feces.</title>
        <authorList>
            <person name="Fouts D.E."/>
            <person name="Mongodin E.F."/>
            <person name="Puiu D."/>
            <person name="Sebastian Y."/>
            <person name="Miller W.G."/>
            <person name="Mandrell R.E."/>
            <person name="Lastovica A.J."/>
            <person name="Nelson K.E."/>
        </authorList>
    </citation>
    <scope>NUCLEOTIDE SEQUENCE [LARGE SCALE GENOMIC DNA]</scope>
    <source>
        <strain>525.92</strain>
    </source>
</reference>
<evidence type="ECO:0000255" key="1">
    <source>
        <dbReference type="HAMAP-Rule" id="MF_00156"/>
    </source>
</evidence>
<gene>
    <name evidence="1" type="primary">panB</name>
    <name type="ordered locus">Ccur92_13860</name>
    <name type="ORF">CCV52592_1923</name>
</gene>
<proteinExistence type="inferred from homology"/>
<keyword id="KW-0963">Cytoplasm</keyword>
<keyword id="KW-0460">Magnesium</keyword>
<keyword id="KW-0479">Metal-binding</keyword>
<keyword id="KW-0566">Pantothenate biosynthesis</keyword>
<keyword id="KW-1185">Reference proteome</keyword>
<keyword id="KW-0808">Transferase</keyword>
<accession>A7GZP8</accession>